<proteinExistence type="inferred from homology"/>
<protein>
    <recommendedName>
        <fullName evidence="1">Nucleotide-binding protein SPT_1506</fullName>
    </recommendedName>
</protein>
<feature type="chain" id="PRO_1000147374" description="Nucleotide-binding protein SPT_1506">
    <location>
        <begin position="1"/>
        <end position="296"/>
    </location>
</feature>
<feature type="binding site" evidence="1">
    <location>
        <begin position="13"/>
        <end position="20"/>
    </location>
    <ligand>
        <name>ATP</name>
        <dbReference type="ChEBI" id="CHEBI:30616"/>
    </ligand>
</feature>
<feature type="binding site" evidence="1">
    <location>
        <begin position="63"/>
        <end position="66"/>
    </location>
    <ligand>
        <name>GTP</name>
        <dbReference type="ChEBI" id="CHEBI:37565"/>
    </ligand>
</feature>
<sequence length="296" mass="33767">MTKKQLHLVIVTGMSGAGKTVAIQSFEDLGYFTIDNMPPALLPKFLQLVEIKEDNPKLALVVDMRSRSFFSEIQAVLDELENQDGLDFKILFLDAADKELVARYKETRRSHPLAADGRILDGIKLERELLAPLKNMSQNVVDTTELTPRELRKTLAEQFSDQEQAQSFRIEVMSFGFKYGIPIDADLVFDVRFLPNPYYLPELRNQTGVDEPVYDYVMNHPESEDFYQHLLALIEPILPSYQKEGKSVLTIAMGCTGGQHRSVAFAKRLAQDLSKNWSVNEGHRDKDRRKETVNRS</sequence>
<gene>
    <name type="ordered locus">SPT_1506</name>
</gene>
<organism>
    <name type="scientific">Streptococcus pneumoniae (strain Taiwan19F-14)</name>
    <dbReference type="NCBI Taxonomy" id="487213"/>
    <lineage>
        <taxon>Bacteria</taxon>
        <taxon>Bacillati</taxon>
        <taxon>Bacillota</taxon>
        <taxon>Bacilli</taxon>
        <taxon>Lactobacillales</taxon>
        <taxon>Streptococcaceae</taxon>
        <taxon>Streptococcus</taxon>
    </lineage>
</organism>
<evidence type="ECO:0000255" key="1">
    <source>
        <dbReference type="HAMAP-Rule" id="MF_00636"/>
    </source>
</evidence>
<accession>C1CSI6</accession>
<dbReference type="EMBL" id="CP000921">
    <property type="protein sequence ID" value="ACO22775.1"/>
    <property type="molecule type" value="Genomic_DNA"/>
</dbReference>
<dbReference type="SMR" id="C1CSI6"/>
<dbReference type="KEGG" id="snt:SPT_1506"/>
<dbReference type="HOGENOM" id="CLU_059558_0_0_9"/>
<dbReference type="GO" id="GO:0005524">
    <property type="term" value="F:ATP binding"/>
    <property type="evidence" value="ECO:0007669"/>
    <property type="project" value="UniProtKB-UniRule"/>
</dbReference>
<dbReference type="GO" id="GO:0005525">
    <property type="term" value="F:GTP binding"/>
    <property type="evidence" value="ECO:0007669"/>
    <property type="project" value="UniProtKB-UniRule"/>
</dbReference>
<dbReference type="Gene3D" id="3.40.50.300">
    <property type="entry name" value="P-loop containing nucleotide triphosphate hydrolases"/>
    <property type="match status" value="1"/>
</dbReference>
<dbReference type="HAMAP" id="MF_00636">
    <property type="entry name" value="RapZ_like"/>
    <property type="match status" value="1"/>
</dbReference>
<dbReference type="InterPro" id="IPR027417">
    <property type="entry name" value="P-loop_NTPase"/>
</dbReference>
<dbReference type="InterPro" id="IPR005337">
    <property type="entry name" value="RapZ-like"/>
</dbReference>
<dbReference type="InterPro" id="IPR053930">
    <property type="entry name" value="RapZ-like_N"/>
</dbReference>
<dbReference type="InterPro" id="IPR053931">
    <property type="entry name" value="RapZ_C"/>
</dbReference>
<dbReference type="NCBIfam" id="NF003828">
    <property type="entry name" value="PRK05416.1"/>
    <property type="match status" value="1"/>
</dbReference>
<dbReference type="PANTHER" id="PTHR30448">
    <property type="entry name" value="RNASE ADAPTER PROTEIN RAPZ"/>
    <property type="match status" value="1"/>
</dbReference>
<dbReference type="PANTHER" id="PTHR30448:SF0">
    <property type="entry name" value="RNASE ADAPTER PROTEIN RAPZ"/>
    <property type="match status" value="1"/>
</dbReference>
<dbReference type="Pfam" id="PF22740">
    <property type="entry name" value="PapZ_C"/>
    <property type="match status" value="1"/>
</dbReference>
<dbReference type="Pfam" id="PF03668">
    <property type="entry name" value="RapZ-like_N"/>
    <property type="match status" value="1"/>
</dbReference>
<dbReference type="PIRSF" id="PIRSF005052">
    <property type="entry name" value="P-loopkin"/>
    <property type="match status" value="1"/>
</dbReference>
<dbReference type="SUPFAM" id="SSF52540">
    <property type="entry name" value="P-loop containing nucleoside triphosphate hydrolases"/>
    <property type="match status" value="1"/>
</dbReference>
<reference key="1">
    <citation type="journal article" date="2010" name="Genome Biol.">
        <title>Structure and dynamics of the pan-genome of Streptococcus pneumoniae and closely related species.</title>
        <authorList>
            <person name="Donati C."/>
            <person name="Hiller N.L."/>
            <person name="Tettelin H."/>
            <person name="Muzzi A."/>
            <person name="Croucher N.J."/>
            <person name="Angiuoli S.V."/>
            <person name="Oggioni M."/>
            <person name="Dunning Hotopp J.C."/>
            <person name="Hu F.Z."/>
            <person name="Riley D.R."/>
            <person name="Covacci A."/>
            <person name="Mitchell T.J."/>
            <person name="Bentley S.D."/>
            <person name="Kilian M."/>
            <person name="Ehrlich G.D."/>
            <person name="Rappuoli R."/>
            <person name="Moxon E.R."/>
            <person name="Masignani V."/>
        </authorList>
    </citation>
    <scope>NUCLEOTIDE SEQUENCE [LARGE SCALE GENOMIC DNA]</scope>
    <source>
        <strain>Taiwan19F-14</strain>
    </source>
</reference>
<name>Y1506_STRZT</name>
<comment type="function">
    <text evidence="1">Displays ATPase and GTPase activities.</text>
</comment>
<comment type="similarity">
    <text evidence="1">Belongs to the RapZ-like family.</text>
</comment>
<keyword id="KW-0067">ATP-binding</keyword>
<keyword id="KW-0342">GTP-binding</keyword>
<keyword id="KW-0547">Nucleotide-binding</keyword>